<accession>Q5PCZ8</accession>
<dbReference type="EMBL" id="CP000026">
    <property type="protein sequence ID" value="AAV77134.1"/>
    <property type="status" value="ALT_INIT"/>
    <property type="molecule type" value="Genomic_DNA"/>
</dbReference>
<dbReference type="RefSeq" id="WP_001279854.1">
    <property type="nucleotide sequence ID" value="NC_006511.1"/>
</dbReference>
<dbReference type="KEGG" id="spt:SPA1173"/>
<dbReference type="HOGENOM" id="CLU_180697_1_0_6"/>
<dbReference type="Proteomes" id="UP000008185">
    <property type="component" value="Chromosome"/>
</dbReference>
<dbReference type="HAMAP" id="MF_01641">
    <property type="entry name" value="UPF0509"/>
    <property type="match status" value="1"/>
</dbReference>
<dbReference type="InterPro" id="IPR020887">
    <property type="entry name" value="UPF0509"/>
</dbReference>
<dbReference type="NCBIfam" id="NF010179">
    <property type="entry name" value="PRK13658.1"/>
    <property type="match status" value="1"/>
</dbReference>
<dbReference type="Pfam" id="PF23675">
    <property type="entry name" value="YciZ"/>
    <property type="match status" value="1"/>
</dbReference>
<name>YCIZ_SALPA</name>
<gene>
    <name evidence="1" type="primary">yciZ</name>
    <name type="ordered locus">SPA1173</name>
</gene>
<protein>
    <recommendedName>
        <fullName evidence="1">UPF0509 protein YciZ</fullName>
    </recommendedName>
</protein>
<proteinExistence type="inferred from homology"/>
<feature type="chain" id="PRO_0000312012" description="UPF0509 protein YciZ">
    <location>
        <begin position="1"/>
        <end position="59"/>
    </location>
</feature>
<sequence length="59" mass="6430">MSDIEAQRIAARIDTVLDILVAGDYHSAINNLEILRAELLDQVKDGISPSQAPGSPWEI</sequence>
<organism>
    <name type="scientific">Salmonella paratyphi A (strain ATCC 9150 / SARB42)</name>
    <dbReference type="NCBI Taxonomy" id="295319"/>
    <lineage>
        <taxon>Bacteria</taxon>
        <taxon>Pseudomonadati</taxon>
        <taxon>Pseudomonadota</taxon>
        <taxon>Gammaproteobacteria</taxon>
        <taxon>Enterobacterales</taxon>
        <taxon>Enterobacteriaceae</taxon>
        <taxon>Salmonella</taxon>
    </lineage>
</organism>
<comment type="similarity">
    <text evidence="1">Belongs to the UPF0509 family.</text>
</comment>
<comment type="sequence caution" evidence="2">
    <conflict type="erroneous initiation">
        <sequence resource="EMBL-CDS" id="AAV77134"/>
    </conflict>
</comment>
<evidence type="ECO:0000255" key="1">
    <source>
        <dbReference type="HAMAP-Rule" id="MF_01641"/>
    </source>
</evidence>
<evidence type="ECO:0000305" key="2"/>
<reference key="1">
    <citation type="journal article" date="2004" name="Nat. Genet.">
        <title>Comparison of genome degradation in Paratyphi A and Typhi, human-restricted serovars of Salmonella enterica that cause typhoid.</title>
        <authorList>
            <person name="McClelland M."/>
            <person name="Sanderson K.E."/>
            <person name="Clifton S.W."/>
            <person name="Latreille P."/>
            <person name="Porwollik S."/>
            <person name="Sabo A."/>
            <person name="Meyer R."/>
            <person name="Bieri T."/>
            <person name="Ozersky P."/>
            <person name="McLellan M."/>
            <person name="Harkins C.R."/>
            <person name="Wang C."/>
            <person name="Nguyen C."/>
            <person name="Berghoff A."/>
            <person name="Elliott G."/>
            <person name="Kohlberg S."/>
            <person name="Strong C."/>
            <person name="Du F."/>
            <person name="Carter J."/>
            <person name="Kremizki C."/>
            <person name="Layman D."/>
            <person name="Leonard S."/>
            <person name="Sun H."/>
            <person name="Fulton L."/>
            <person name="Nash W."/>
            <person name="Miner T."/>
            <person name="Minx P."/>
            <person name="Delehaunty K."/>
            <person name="Fronick C."/>
            <person name="Magrini V."/>
            <person name="Nhan M."/>
            <person name="Warren W."/>
            <person name="Florea L."/>
            <person name="Spieth J."/>
            <person name="Wilson R.K."/>
        </authorList>
    </citation>
    <scope>NUCLEOTIDE SEQUENCE [LARGE SCALE GENOMIC DNA]</scope>
    <source>
        <strain>ATCC 9150 / SARB42</strain>
    </source>
</reference>